<evidence type="ECO:0000255" key="1">
    <source>
        <dbReference type="HAMAP-Rule" id="MF_01718"/>
    </source>
</evidence>
<sequence length="264" mass="28963">MIEAVNICVQRGKKQILNHIDFQAKSSALTVIIGPNGSGKSTFVKALSGEIPYSGKMTLNGHDVTHTKTYEMAAMRAVLPQFTTLAFPFLVHEVVALGLSVNQFTIAKKQLQNLPQKALECVGLADYGNRHYHQLSGGEQARVQLARVLCQIWEPVCNKVPRWMILDEPIANLDIQHQLVVMNIARNFARCGGGVLAVLHDLNLAAHYADKMILLKQGKIYCEGSASTVLTTQNLSDAYHCSLPVSELPKADTPFVLPQTASFL</sequence>
<organism>
    <name type="scientific">Bartonella quintana (strain Toulouse)</name>
    <name type="common">Rochalimaea quintana</name>
    <dbReference type="NCBI Taxonomy" id="283165"/>
    <lineage>
        <taxon>Bacteria</taxon>
        <taxon>Pseudomonadati</taxon>
        <taxon>Pseudomonadota</taxon>
        <taxon>Alphaproteobacteria</taxon>
        <taxon>Hyphomicrobiales</taxon>
        <taxon>Bartonellaceae</taxon>
        <taxon>Bartonella</taxon>
    </lineage>
</organism>
<dbReference type="EC" id="7.6.2.-" evidence="1"/>
<dbReference type="EMBL" id="BX897700">
    <property type="protein sequence ID" value="CAF25911.1"/>
    <property type="molecule type" value="Genomic_DNA"/>
</dbReference>
<dbReference type="RefSeq" id="WP_011179200.1">
    <property type="nucleotide sequence ID" value="NC_005955.1"/>
</dbReference>
<dbReference type="SMR" id="Q6G098"/>
<dbReference type="KEGG" id="bqu:BQ04120"/>
<dbReference type="eggNOG" id="COG4559">
    <property type="taxonomic scope" value="Bacteria"/>
</dbReference>
<dbReference type="HOGENOM" id="CLU_000604_1_11_5"/>
<dbReference type="OrthoDB" id="9810077at2"/>
<dbReference type="Proteomes" id="UP000000597">
    <property type="component" value="Chromosome"/>
</dbReference>
<dbReference type="GO" id="GO:0005886">
    <property type="term" value="C:plasma membrane"/>
    <property type="evidence" value="ECO:0007669"/>
    <property type="project" value="UniProtKB-SubCell"/>
</dbReference>
<dbReference type="GO" id="GO:0005524">
    <property type="term" value="F:ATP binding"/>
    <property type="evidence" value="ECO:0007669"/>
    <property type="project" value="UniProtKB-KW"/>
</dbReference>
<dbReference type="GO" id="GO:0016887">
    <property type="term" value="F:ATP hydrolysis activity"/>
    <property type="evidence" value="ECO:0007669"/>
    <property type="project" value="InterPro"/>
</dbReference>
<dbReference type="CDD" id="cd03214">
    <property type="entry name" value="ABC_Iron-Siderophores_B12_Hemin"/>
    <property type="match status" value="1"/>
</dbReference>
<dbReference type="Gene3D" id="3.40.50.300">
    <property type="entry name" value="P-loop containing nucleotide triphosphate hydrolases"/>
    <property type="match status" value="1"/>
</dbReference>
<dbReference type="InterPro" id="IPR003593">
    <property type="entry name" value="AAA+_ATPase"/>
</dbReference>
<dbReference type="InterPro" id="IPR003439">
    <property type="entry name" value="ABC_transporter-like_ATP-bd"/>
</dbReference>
<dbReference type="InterPro" id="IPR017871">
    <property type="entry name" value="ABC_transporter-like_CS"/>
</dbReference>
<dbReference type="InterPro" id="IPR027417">
    <property type="entry name" value="P-loop_NTPase"/>
</dbReference>
<dbReference type="NCBIfam" id="NF010068">
    <property type="entry name" value="PRK13548.1"/>
    <property type="match status" value="1"/>
</dbReference>
<dbReference type="PANTHER" id="PTHR42794">
    <property type="entry name" value="HEMIN IMPORT ATP-BINDING PROTEIN HMUV"/>
    <property type="match status" value="1"/>
</dbReference>
<dbReference type="PANTHER" id="PTHR42794:SF1">
    <property type="entry name" value="HEMIN IMPORT ATP-BINDING PROTEIN HMUV"/>
    <property type="match status" value="1"/>
</dbReference>
<dbReference type="Pfam" id="PF00005">
    <property type="entry name" value="ABC_tran"/>
    <property type="match status" value="1"/>
</dbReference>
<dbReference type="SMART" id="SM00382">
    <property type="entry name" value="AAA"/>
    <property type="match status" value="1"/>
</dbReference>
<dbReference type="SUPFAM" id="SSF52540">
    <property type="entry name" value="P-loop containing nucleoside triphosphate hydrolases"/>
    <property type="match status" value="1"/>
</dbReference>
<dbReference type="PROSITE" id="PS00211">
    <property type="entry name" value="ABC_TRANSPORTER_1"/>
    <property type="match status" value="1"/>
</dbReference>
<dbReference type="PROSITE" id="PS50893">
    <property type="entry name" value="ABC_TRANSPORTER_2"/>
    <property type="match status" value="1"/>
</dbReference>
<dbReference type="PROSITE" id="PS51261">
    <property type="entry name" value="HMUV"/>
    <property type="match status" value="1"/>
</dbReference>
<comment type="function">
    <text evidence="1">Part of the ABC transporter complex HmuTUV involved in hemin import. Responsible for energy coupling to the transport system.</text>
</comment>
<comment type="subunit">
    <text evidence="1">The complex is composed of two ATP-binding proteins (HmuV), two transmembrane proteins (HmuU) and a solute-binding protein (HmuT).</text>
</comment>
<comment type="subcellular location">
    <subcellularLocation>
        <location evidence="1">Cell inner membrane</location>
        <topology evidence="1">Peripheral membrane protein</topology>
    </subcellularLocation>
</comment>
<comment type="similarity">
    <text evidence="1">Belongs to the ABC transporter superfamily. Heme (hemin) importer (TC 3.A.1.14.5) family.</text>
</comment>
<feature type="chain" id="PRO_0000269574" description="Hemin import ATP-binding protein HmuV">
    <location>
        <begin position="1"/>
        <end position="264"/>
    </location>
</feature>
<feature type="domain" description="ABC transporter" evidence="1">
    <location>
        <begin position="2"/>
        <end position="242"/>
    </location>
</feature>
<feature type="binding site" evidence="1">
    <location>
        <begin position="34"/>
        <end position="41"/>
    </location>
    <ligand>
        <name>ATP</name>
        <dbReference type="ChEBI" id="CHEBI:30616"/>
    </ligand>
</feature>
<accession>Q6G098</accession>
<protein>
    <recommendedName>
        <fullName evidence="1">Hemin import ATP-binding protein HmuV</fullName>
        <ecNumber evidence="1">7.6.2.-</ecNumber>
    </recommendedName>
</protein>
<proteinExistence type="inferred from homology"/>
<name>HMUV_BARQU</name>
<reference key="1">
    <citation type="journal article" date="2004" name="Proc. Natl. Acad. Sci. U.S.A.">
        <title>The louse-borne human pathogen Bartonella quintana is a genomic derivative of the zoonotic agent Bartonella henselae.</title>
        <authorList>
            <person name="Alsmark U.C.M."/>
            <person name="Frank A.C."/>
            <person name="Karlberg E.O."/>
            <person name="Legault B.-A."/>
            <person name="Ardell D.H."/>
            <person name="Canbaeck B."/>
            <person name="Eriksson A.-S."/>
            <person name="Naeslund A.K."/>
            <person name="Handley S.A."/>
            <person name="Huvet M."/>
            <person name="La Scola B."/>
            <person name="Holmberg M."/>
            <person name="Andersson S.G.E."/>
        </authorList>
    </citation>
    <scope>NUCLEOTIDE SEQUENCE [LARGE SCALE GENOMIC DNA]</scope>
    <source>
        <strain>Toulouse</strain>
    </source>
</reference>
<gene>
    <name evidence="1" type="primary">hmuV</name>
    <name type="ordered locus">BQ04120</name>
</gene>
<keyword id="KW-0067">ATP-binding</keyword>
<keyword id="KW-0997">Cell inner membrane</keyword>
<keyword id="KW-1003">Cell membrane</keyword>
<keyword id="KW-0472">Membrane</keyword>
<keyword id="KW-0547">Nucleotide-binding</keyword>
<keyword id="KW-1278">Translocase</keyword>
<keyword id="KW-0813">Transport</keyword>